<reference key="1">
    <citation type="journal article" date="2004" name="Proc. Natl. Acad. Sci. U.S.A.">
        <title>The louse-borne human pathogen Bartonella quintana is a genomic derivative of the zoonotic agent Bartonella henselae.</title>
        <authorList>
            <person name="Alsmark U.C.M."/>
            <person name="Frank A.C."/>
            <person name="Karlberg E.O."/>
            <person name="Legault B.-A."/>
            <person name="Ardell D.H."/>
            <person name="Canbaeck B."/>
            <person name="Eriksson A.-S."/>
            <person name="Naeslund A.K."/>
            <person name="Handley S.A."/>
            <person name="Huvet M."/>
            <person name="La Scola B."/>
            <person name="Holmberg M."/>
            <person name="Andersson S.G.E."/>
        </authorList>
    </citation>
    <scope>NUCLEOTIDE SEQUENCE [LARGE SCALE GENOMIC DNA]</scope>
    <source>
        <strain>Toulouse</strain>
    </source>
</reference>
<name>SYC_BARQU</name>
<feature type="chain" id="PRO_0000159355" description="Cysteine--tRNA ligase">
    <location>
        <begin position="1"/>
        <end position="502"/>
    </location>
</feature>
<feature type="short sequence motif" description="'HIGH' region">
    <location>
        <begin position="32"/>
        <end position="42"/>
    </location>
</feature>
<feature type="short sequence motif" description="'KMSKS' region">
    <location>
        <begin position="296"/>
        <end position="300"/>
    </location>
</feature>
<feature type="binding site" evidence="1">
    <location>
        <position position="30"/>
    </location>
    <ligand>
        <name>Zn(2+)</name>
        <dbReference type="ChEBI" id="CHEBI:29105"/>
    </ligand>
</feature>
<feature type="binding site" evidence="1">
    <location>
        <position position="224"/>
    </location>
    <ligand>
        <name>Zn(2+)</name>
        <dbReference type="ChEBI" id="CHEBI:29105"/>
    </ligand>
</feature>
<feature type="binding site" evidence="1">
    <location>
        <position position="263"/>
    </location>
    <ligand>
        <name>Zn(2+)</name>
        <dbReference type="ChEBI" id="CHEBI:29105"/>
    </ligand>
</feature>
<feature type="binding site" evidence="1">
    <location>
        <position position="267"/>
    </location>
    <ligand>
        <name>Zn(2+)</name>
        <dbReference type="ChEBI" id="CHEBI:29105"/>
    </ligand>
</feature>
<feature type="binding site" evidence="1">
    <location>
        <position position="299"/>
    </location>
    <ligand>
        <name>ATP</name>
        <dbReference type="ChEBI" id="CHEBI:30616"/>
    </ligand>
</feature>
<evidence type="ECO:0000255" key="1">
    <source>
        <dbReference type="HAMAP-Rule" id="MF_00041"/>
    </source>
</evidence>
<keyword id="KW-0030">Aminoacyl-tRNA synthetase</keyword>
<keyword id="KW-0067">ATP-binding</keyword>
<keyword id="KW-0963">Cytoplasm</keyword>
<keyword id="KW-0436">Ligase</keyword>
<keyword id="KW-0479">Metal-binding</keyword>
<keyword id="KW-0547">Nucleotide-binding</keyword>
<keyword id="KW-0648">Protein biosynthesis</keyword>
<keyword id="KW-0862">Zinc</keyword>
<proteinExistence type="inferred from homology"/>
<gene>
    <name evidence="1" type="primary">cysS</name>
    <name type="ordered locus">BQ04370</name>
</gene>
<organism>
    <name type="scientific">Bartonella quintana (strain Toulouse)</name>
    <name type="common">Rochalimaea quintana</name>
    <dbReference type="NCBI Taxonomy" id="283165"/>
    <lineage>
        <taxon>Bacteria</taxon>
        <taxon>Pseudomonadati</taxon>
        <taxon>Pseudomonadota</taxon>
        <taxon>Alphaproteobacteria</taxon>
        <taxon>Hyphomicrobiales</taxon>
        <taxon>Bartonellaceae</taxon>
        <taxon>Bartonella</taxon>
    </lineage>
</organism>
<protein>
    <recommendedName>
        <fullName evidence="1">Cysteine--tRNA ligase</fullName>
        <ecNumber evidence="1">6.1.1.16</ecNumber>
    </recommendedName>
    <alternativeName>
        <fullName evidence="1">Cysteinyl-tRNA synthetase</fullName>
        <shortName evidence="1">CysRS</shortName>
    </alternativeName>
</protein>
<comment type="catalytic activity">
    <reaction evidence="1">
        <text>tRNA(Cys) + L-cysteine + ATP = L-cysteinyl-tRNA(Cys) + AMP + diphosphate</text>
        <dbReference type="Rhea" id="RHEA:17773"/>
        <dbReference type="Rhea" id="RHEA-COMP:9661"/>
        <dbReference type="Rhea" id="RHEA-COMP:9679"/>
        <dbReference type="ChEBI" id="CHEBI:30616"/>
        <dbReference type="ChEBI" id="CHEBI:33019"/>
        <dbReference type="ChEBI" id="CHEBI:35235"/>
        <dbReference type="ChEBI" id="CHEBI:78442"/>
        <dbReference type="ChEBI" id="CHEBI:78517"/>
        <dbReference type="ChEBI" id="CHEBI:456215"/>
        <dbReference type="EC" id="6.1.1.16"/>
    </reaction>
</comment>
<comment type="cofactor">
    <cofactor evidence="1">
        <name>Zn(2+)</name>
        <dbReference type="ChEBI" id="CHEBI:29105"/>
    </cofactor>
    <text evidence="1">Binds 1 zinc ion per subunit.</text>
</comment>
<comment type="subunit">
    <text evidence="1">Monomer.</text>
</comment>
<comment type="subcellular location">
    <subcellularLocation>
        <location evidence="1">Cytoplasm</location>
    </subcellularLocation>
</comment>
<comment type="similarity">
    <text evidence="1">Belongs to the class-I aminoacyl-tRNA synthetase family.</text>
</comment>
<sequence>MRKLRFYNTLTRKKENFTPIDATKVRLYVCGPTIYDYAHIGNARSVIVFDVLFRLLRYVYGNEHVIYVRNITDVDDKINARAACEHPELALNDAIRQLTERTYSQFQQDTMALGCLLPTSQPRATDHLEDMRSLIERLLEKGHAYKVQNHVLFSVRSIRNHPHYGAFAKRSLDEMRAGARVDVAAYKREEMDFVLWKPSAVGEPGWASPAGIPVLGRPGWHIECSAMSMAKLLAPYGGGLTCDDPTANVFDIHGGGIDLIFPHHENEIAQSCSAFGTERMANLWMHNGFLQVEGKKMSKSLGNFITIRSILESDFFEFNGVLTDEMKQNWAGLSARFSMLQTHYREPLNWTAQRLVQSSSELYRWYELLCFEREEMEKNEALDDSVIDALSDDLNTPKALTLLRKFYKAGNAIALANGMNLFGLLRQEWVQEVECPLFMRKISLNSKFIDQRIAERLRLIHNKEWAAADTIRDELAAKGVILKDGKDPQTGERTTMWEMRRL</sequence>
<dbReference type="EC" id="6.1.1.16" evidence="1"/>
<dbReference type="EMBL" id="BX897700">
    <property type="protein sequence ID" value="CAF25936.1"/>
    <property type="molecule type" value="Genomic_DNA"/>
</dbReference>
<dbReference type="RefSeq" id="WP_011179225.1">
    <property type="nucleotide sequence ID" value="NC_005955.1"/>
</dbReference>
<dbReference type="SMR" id="Q6G073"/>
<dbReference type="KEGG" id="bqu:BQ04370"/>
<dbReference type="eggNOG" id="COG0215">
    <property type="taxonomic scope" value="Bacteria"/>
</dbReference>
<dbReference type="HOGENOM" id="CLU_013528_0_1_5"/>
<dbReference type="OrthoDB" id="9815130at2"/>
<dbReference type="Proteomes" id="UP000000597">
    <property type="component" value="Chromosome"/>
</dbReference>
<dbReference type="GO" id="GO:0005829">
    <property type="term" value="C:cytosol"/>
    <property type="evidence" value="ECO:0007669"/>
    <property type="project" value="TreeGrafter"/>
</dbReference>
<dbReference type="GO" id="GO:0005524">
    <property type="term" value="F:ATP binding"/>
    <property type="evidence" value="ECO:0007669"/>
    <property type="project" value="UniProtKB-UniRule"/>
</dbReference>
<dbReference type="GO" id="GO:0004817">
    <property type="term" value="F:cysteine-tRNA ligase activity"/>
    <property type="evidence" value="ECO:0007669"/>
    <property type="project" value="UniProtKB-UniRule"/>
</dbReference>
<dbReference type="GO" id="GO:0008270">
    <property type="term" value="F:zinc ion binding"/>
    <property type="evidence" value="ECO:0007669"/>
    <property type="project" value="UniProtKB-UniRule"/>
</dbReference>
<dbReference type="GO" id="GO:0006423">
    <property type="term" value="P:cysteinyl-tRNA aminoacylation"/>
    <property type="evidence" value="ECO:0007669"/>
    <property type="project" value="UniProtKB-UniRule"/>
</dbReference>
<dbReference type="CDD" id="cd00672">
    <property type="entry name" value="CysRS_core"/>
    <property type="match status" value="1"/>
</dbReference>
<dbReference type="Gene3D" id="1.20.120.1910">
    <property type="entry name" value="Cysteine-tRNA ligase, C-terminal anti-codon recognition domain"/>
    <property type="match status" value="1"/>
</dbReference>
<dbReference type="Gene3D" id="3.40.50.620">
    <property type="entry name" value="HUPs"/>
    <property type="match status" value="1"/>
</dbReference>
<dbReference type="HAMAP" id="MF_00041">
    <property type="entry name" value="Cys_tRNA_synth"/>
    <property type="match status" value="1"/>
</dbReference>
<dbReference type="InterPro" id="IPR015803">
    <property type="entry name" value="Cys-tRNA-ligase"/>
</dbReference>
<dbReference type="InterPro" id="IPR015273">
    <property type="entry name" value="Cys-tRNA-synt_Ia_DALR"/>
</dbReference>
<dbReference type="InterPro" id="IPR024909">
    <property type="entry name" value="Cys-tRNA/MSH_ligase"/>
</dbReference>
<dbReference type="InterPro" id="IPR056411">
    <property type="entry name" value="CysS_C"/>
</dbReference>
<dbReference type="InterPro" id="IPR014729">
    <property type="entry name" value="Rossmann-like_a/b/a_fold"/>
</dbReference>
<dbReference type="InterPro" id="IPR032678">
    <property type="entry name" value="tRNA-synt_1_cat_dom"/>
</dbReference>
<dbReference type="InterPro" id="IPR009080">
    <property type="entry name" value="tRNAsynth_Ia_anticodon-bd"/>
</dbReference>
<dbReference type="NCBIfam" id="TIGR00435">
    <property type="entry name" value="cysS"/>
    <property type="match status" value="1"/>
</dbReference>
<dbReference type="PANTHER" id="PTHR10890:SF3">
    <property type="entry name" value="CYSTEINE--TRNA LIGASE, CYTOPLASMIC"/>
    <property type="match status" value="1"/>
</dbReference>
<dbReference type="PANTHER" id="PTHR10890">
    <property type="entry name" value="CYSTEINYL-TRNA SYNTHETASE"/>
    <property type="match status" value="1"/>
</dbReference>
<dbReference type="Pfam" id="PF23493">
    <property type="entry name" value="CysS_C"/>
    <property type="match status" value="1"/>
</dbReference>
<dbReference type="Pfam" id="PF01406">
    <property type="entry name" value="tRNA-synt_1e"/>
    <property type="match status" value="1"/>
</dbReference>
<dbReference type="PRINTS" id="PR00983">
    <property type="entry name" value="TRNASYNTHCYS"/>
</dbReference>
<dbReference type="SMART" id="SM00840">
    <property type="entry name" value="DALR_2"/>
    <property type="match status" value="1"/>
</dbReference>
<dbReference type="SUPFAM" id="SSF47323">
    <property type="entry name" value="Anticodon-binding domain of a subclass of class I aminoacyl-tRNA synthetases"/>
    <property type="match status" value="1"/>
</dbReference>
<dbReference type="SUPFAM" id="SSF52374">
    <property type="entry name" value="Nucleotidylyl transferase"/>
    <property type="match status" value="1"/>
</dbReference>
<accession>Q6G073</accession>